<gene>
    <name evidence="1" type="primary">murD</name>
    <name type="ordered locus">GFO_2770</name>
</gene>
<accession>A0M529</accession>
<reference key="1">
    <citation type="journal article" date="2006" name="Environ. Microbiol.">
        <title>Whole genome analysis of the marine Bacteroidetes'Gramella forsetii' reveals adaptations to degradation of polymeric organic matter.</title>
        <authorList>
            <person name="Bauer M."/>
            <person name="Kube M."/>
            <person name="Teeling H."/>
            <person name="Richter M."/>
            <person name="Lombardot T."/>
            <person name="Allers E."/>
            <person name="Wuerdemann C.A."/>
            <person name="Quast C."/>
            <person name="Kuhl H."/>
            <person name="Knaust F."/>
            <person name="Woebken D."/>
            <person name="Bischof K."/>
            <person name="Mussmann M."/>
            <person name="Choudhuri J.V."/>
            <person name="Meyer F."/>
            <person name="Reinhardt R."/>
            <person name="Amann R.I."/>
            <person name="Gloeckner F.O."/>
        </authorList>
    </citation>
    <scope>NUCLEOTIDE SEQUENCE [LARGE SCALE GENOMIC DNA]</scope>
    <source>
        <strain>DSM 17595 / CGMCC 1.15422 / KT0803</strain>
    </source>
</reference>
<feature type="chain" id="PRO_0000301428" description="UDP-N-acetylmuramoylalanine--D-glutamate ligase">
    <location>
        <begin position="1"/>
        <end position="445"/>
    </location>
</feature>
<feature type="binding site" evidence="1">
    <location>
        <begin position="110"/>
        <end position="116"/>
    </location>
    <ligand>
        <name>ATP</name>
        <dbReference type="ChEBI" id="CHEBI:30616"/>
    </ligand>
</feature>
<protein>
    <recommendedName>
        <fullName evidence="1">UDP-N-acetylmuramoylalanine--D-glutamate ligase</fullName>
        <ecNumber evidence="1">6.3.2.9</ecNumber>
    </recommendedName>
    <alternativeName>
        <fullName evidence="1">D-glutamic acid-adding enzyme</fullName>
    </alternativeName>
    <alternativeName>
        <fullName evidence="1">UDP-N-acetylmuramoyl-L-alanyl-D-glutamate synthetase</fullName>
    </alternativeName>
</protein>
<keyword id="KW-0067">ATP-binding</keyword>
<keyword id="KW-0131">Cell cycle</keyword>
<keyword id="KW-0132">Cell division</keyword>
<keyword id="KW-0133">Cell shape</keyword>
<keyword id="KW-0961">Cell wall biogenesis/degradation</keyword>
<keyword id="KW-0963">Cytoplasm</keyword>
<keyword id="KW-0436">Ligase</keyword>
<keyword id="KW-0547">Nucleotide-binding</keyword>
<keyword id="KW-0573">Peptidoglycan synthesis</keyword>
<comment type="function">
    <text evidence="1">Cell wall formation. Catalyzes the addition of glutamate to the nucleotide precursor UDP-N-acetylmuramoyl-L-alanine (UMA).</text>
</comment>
<comment type="catalytic activity">
    <reaction evidence="1">
        <text>UDP-N-acetyl-alpha-D-muramoyl-L-alanine + D-glutamate + ATP = UDP-N-acetyl-alpha-D-muramoyl-L-alanyl-D-glutamate + ADP + phosphate + H(+)</text>
        <dbReference type="Rhea" id="RHEA:16429"/>
        <dbReference type="ChEBI" id="CHEBI:15378"/>
        <dbReference type="ChEBI" id="CHEBI:29986"/>
        <dbReference type="ChEBI" id="CHEBI:30616"/>
        <dbReference type="ChEBI" id="CHEBI:43474"/>
        <dbReference type="ChEBI" id="CHEBI:83898"/>
        <dbReference type="ChEBI" id="CHEBI:83900"/>
        <dbReference type="ChEBI" id="CHEBI:456216"/>
        <dbReference type="EC" id="6.3.2.9"/>
    </reaction>
</comment>
<comment type="pathway">
    <text evidence="1">Cell wall biogenesis; peptidoglycan biosynthesis.</text>
</comment>
<comment type="subcellular location">
    <subcellularLocation>
        <location evidence="1">Cytoplasm</location>
    </subcellularLocation>
</comment>
<comment type="similarity">
    <text evidence="1">Belongs to the MurCDEF family.</text>
</comment>
<evidence type="ECO:0000255" key="1">
    <source>
        <dbReference type="HAMAP-Rule" id="MF_00639"/>
    </source>
</evidence>
<sequence>MGKKIVILGGGESGIGTAILAKKNGYDVFLSDKGKIKDKYKEVLKHIEIEWEDEKHTESKIFDADVVMKSPGIPDKAPMIVKLKEKGISVVSEIEFASWFSEVPVIGITGSNGKTTVTNLVQHLLKEGGINSGMGGNIGNSYAKMVAEEMHDWFVLELSSFQLDGIEKFKPHIAILTNITPDHLDRYDYKLENYIASKFRIAENQTEEDYFIYDADDKNITDWLEKNPVRSQKLPFSIEKKIENGAYIENENIVVTINNTKFTMPTSELALQGKHNAKNAMAASMVSQLLRIRKQTIRESMASFQGVEHRLEKVLKINNVLYINDSKATNVNATFYALESMESETVWILGGVDKGNVYDDLLPLVNEKVKAIICLGVDNEKIVSAFGNIVDTMVETTSMSEAVQMAYRLSDKGDNVLLSPACASFDLFENYEDRGRQFKEAVRNL</sequence>
<proteinExistence type="inferred from homology"/>
<organism>
    <name type="scientific">Christiangramia forsetii (strain DSM 17595 / CGMCC 1.15422 / KT0803)</name>
    <name type="common">Gramella forsetii</name>
    <dbReference type="NCBI Taxonomy" id="411154"/>
    <lineage>
        <taxon>Bacteria</taxon>
        <taxon>Pseudomonadati</taxon>
        <taxon>Bacteroidota</taxon>
        <taxon>Flavobacteriia</taxon>
        <taxon>Flavobacteriales</taxon>
        <taxon>Flavobacteriaceae</taxon>
        <taxon>Christiangramia</taxon>
    </lineage>
</organism>
<dbReference type="EC" id="6.3.2.9" evidence="1"/>
<dbReference type="EMBL" id="CU207366">
    <property type="protein sequence ID" value="CAL67724.1"/>
    <property type="molecule type" value="Genomic_DNA"/>
</dbReference>
<dbReference type="RefSeq" id="WP_011710627.1">
    <property type="nucleotide sequence ID" value="NC_008571.1"/>
</dbReference>
<dbReference type="SMR" id="A0M529"/>
<dbReference type="STRING" id="411154.GFO_2770"/>
<dbReference type="KEGG" id="gfo:GFO_2770"/>
<dbReference type="eggNOG" id="COG0771">
    <property type="taxonomic scope" value="Bacteria"/>
</dbReference>
<dbReference type="HOGENOM" id="CLU_032540_0_0_10"/>
<dbReference type="OrthoDB" id="9809796at2"/>
<dbReference type="UniPathway" id="UPA00219"/>
<dbReference type="Proteomes" id="UP000000755">
    <property type="component" value="Chromosome"/>
</dbReference>
<dbReference type="GO" id="GO:0005737">
    <property type="term" value="C:cytoplasm"/>
    <property type="evidence" value="ECO:0007669"/>
    <property type="project" value="UniProtKB-SubCell"/>
</dbReference>
<dbReference type="GO" id="GO:0005524">
    <property type="term" value="F:ATP binding"/>
    <property type="evidence" value="ECO:0007669"/>
    <property type="project" value="UniProtKB-UniRule"/>
</dbReference>
<dbReference type="GO" id="GO:0008764">
    <property type="term" value="F:UDP-N-acetylmuramoylalanine-D-glutamate ligase activity"/>
    <property type="evidence" value="ECO:0007669"/>
    <property type="project" value="UniProtKB-UniRule"/>
</dbReference>
<dbReference type="GO" id="GO:0051301">
    <property type="term" value="P:cell division"/>
    <property type="evidence" value="ECO:0007669"/>
    <property type="project" value="UniProtKB-KW"/>
</dbReference>
<dbReference type="GO" id="GO:0071555">
    <property type="term" value="P:cell wall organization"/>
    <property type="evidence" value="ECO:0007669"/>
    <property type="project" value="UniProtKB-KW"/>
</dbReference>
<dbReference type="GO" id="GO:0009252">
    <property type="term" value="P:peptidoglycan biosynthetic process"/>
    <property type="evidence" value="ECO:0007669"/>
    <property type="project" value="UniProtKB-UniRule"/>
</dbReference>
<dbReference type="GO" id="GO:0008360">
    <property type="term" value="P:regulation of cell shape"/>
    <property type="evidence" value="ECO:0007669"/>
    <property type="project" value="UniProtKB-KW"/>
</dbReference>
<dbReference type="Gene3D" id="3.90.190.20">
    <property type="entry name" value="Mur ligase, C-terminal domain"/>
    <property type="match status" value="1"/>
</dbReference>
<dbReference type="Gene3D" id="3.40.1190.10">
    <property type="entry name" value="Mur-like, catalytic domain"/>
    <property type="match status" value="1"/>
</dbReference>
<dbReference type="Gene3D" id="3.40.50.720">
    <property type="entry name" value="NAD(P)-binding Rossmann-like Domain"/>
    <property type="match status" value="1"/>
</dbReference>
<dbReference type="HAMAP" id="MF_00639">
    <property type="entry name" value="MurD"/>
    <property type="match status" value="1"/>
</dbReference>
<dbReference type="InterPro" id="IPR036565">
    <property type="entry name" value="Mur-like_cat_sf"/>
</dbReference>
<dbReference type="InterPro" id="IPR004101">
    <property type="entry name" value="Mur_ligase_C"/>
</dbReference>
<dbReference type="InterPro" id="IPR036615">
    <property type="entry name" value="Mur_ligase_C_dom_sf"/>
</dbReference>
<dbReference type="InterPro" id="IPR013221">
    <property type="entry name" value="Mur_ligase_cen"/>
</dbReference>
<dbReference type="InterPro" id="IPR005762">
    <property type="entry name" value="MurD"/>
</dbReference>
<dbReference type="NCBIfam" id="TIGR01087">
    <property type="entry name" value="murD"/>
    <property type="match status" value="1"/>
</dbReference>
<dbReference type="PANTHER" id="PTHR43692">
    <property type="entry name" value="UDP-N-ACETYLMURAMOYLALANINE--D-GLUTAMATE LIGASE"/>
    <property type="match status" value="1"/>
</dbReference>
<dbReference type="PANTHER" id="PTHR43692:SF1">
    <property type="entry name" value="UDP-N-ACETYLMURAMOYLALANINE--D-GLUTAMATE LIGASE"/>
    <property type="match status" value="1"/>
</dbReference>
<dbReference type="Pfam" id="PF02875">
    <property type="entry name" value="Mur_ligase_C"/>
    <property type="match status" value="1"/>
</dbReference>
<dbReference type="Pfam" id="PF08245">
    <property type="entry name" value="Mur_ligase_M"/>
    <property type="match status" value="1"/>
</dbReference>
<dbReference type="Pfam" id="PF21799">
    <property type="entry name" value="MurD-like_N"/>
    <property type="match status" value="1"/>
</dbReference>
<dbReference type="Pfam" id="PF21377">
    <property type="entry name" value="MurD_N"/>
    <property type="match status" value="1"/>
</dbReference>
<dbReference type="SUPFAM" id="SSF51984">
    <property type="entry name" value="MurCD N-terminal domain"/>
    <property type="match status" value="1"/>
</dbReference>
<dbReference type="SUPFAM" id="SSF53623">
    <property type="entry name" value="MurD-like peptide ligases, catalytic domain"/>
    <property type="match status" value="1"/>
</dbReference>
<dbReference type="SUPFAM" id="SSF53244">
    <property type="entry name" value="MurD-like peptide ligases, peptide-binding domain"/>
    <property type="match status" value="1"/>
</dbReference>
<name>MURD_CHRFK</name>